<gene>
    <name type="primary">rslA</name>
    <name type="ordered locus">Rv0736</name>
</gene>
<dbReference type="EMBL" id="AL123456">
    <property type="protein sequence ID" value="CCP43481.1"/>
    <property type="molecule type" value="Genomic_DNA"/>
</dbReference>
<dbReference type="RefSeq" id="NP_215250.1">
    <property type="nucleotide sequence ID" value="NC_000962.3"/>
</dbReference>
<dbReference type="RefSeq" id="WP_003403733.1">
    <property type="nucleotide sequence ID" value="NZ_NVQJ01000007.1"/>
</dbReference>
<dbReference type="PDB" id="3HUG">
    <property type="method" value="X-ray"/>
    <property type="resolution" value="2.35 A"/>
    <property type="chains" value="B/D/F/H/J/L/N/P/R/T=1-108"/>
</dbReference>
<dbReference type="PDBsum" id="3HUG"/>
<dbReference type="SMR" id="P9WJ67"/>
<dbReference type="STRING" id="83332.Rv0736"/>
<dbReference type="PaxDb" id="83332-Rv0736"/>
<dbReference type="DNASU" id="888611"/>
<dbReference type="GeneID" id="888611"/>
<dbReference type="KEGG" id="mtu:Rv0736"/>
<dbReference type="KEGG" id="mtv:RVBD_0736"/>
<dbReference type="TubercuList" id="Rv0736"/>
<dbReference type="eggNOG" id="COG1595">
    <property type="taxonomic scope" value="Bacteria"/>
</dbReference>
<dbReference type="InParanoid" id="P9WJ67"/>
<dbReference type="OrthoDB" id="5242431at2"/>
<dbReference type="EvolutionaryTrace" id="P9WJ67"/>
<dbReference type="Proteomes" id="UP000001584">
    <property type="component" value="Chromosome"/>
</dbReference>
<dbReference type="GO" id="GO:0005886">
    <property type="term" value="C:plasma membrane"/>
    <property type="evidence" value="ECO:0007669"/>
    <property type="project" value="UniProtKB-SubCell"/>
</dbReference>
<dbReference type="GO" id="GO:0016989">
    <property type="term" value="F:sigma factor antagonist activity"/>
    <property type="evidence" value="ECO:0000314"/>
    <property type="project" value="MTBBASE"/>
</dbReference>
<dbReference type="GO" id="GO:0008270">
    <property type="term" value="F:zinc ion binding"/>
    <property type="evidence" value="ECO:0000314"/>
    <property type="project" value="MTBBASE"/>
</dbReference>
<dbReference type="Gene3D" id="1.10.10.1320">
    <property type="entry name" value="Anti-sigma factor, zinc-finger domain"/>
    <property type="match status" value="1"/>
</dbReference>
<dbReference type="InterPro" id="IPR051474">
    <property type="entry name" value="Anti-sigma-K/W_factor"/>
</dbReference>
<dbReference type="InterPro" id="IPR041916">
    <property type="entry name" value="Anti_sigma_zinc_sf"/>
</dbReference>
<dbReference type="InterPro" id="IPR027383">
    <property type="entry name" value="Znf_put"/>
</dbReference>
<dbReference type="PANTHER" id="PTHR37461">
    <property type="entry name" value="ANTI-SIGMA-K FACTOR RSKA"/>
    <property type="match status" value="1"/>
</dbReference>
<dbReference type="PANTHER" id="PTHR37461:SF1">
    <property type="entry name" value="ANTI-SIGMA-K FACTOR RSKA"/>
    <property type="match status" value="1"/>
</dbReference>
<dbReference type="Pfam" id="PF13490">
    <property type="entry name" value="zf-HC2"/>
    <property type="match status" value="1"/>
</dbReference>
<sequence length="250" mass="25938">MTMPLRGLGPPDDTGVREVSTGDDHHYAMWDAAYVLGALSAADRREFEAHLAGCPECRGAVTELCGVPALLSQLDRDEVAAISESAPTVVASGLSPELLPSLLAAVHRRRRRTRLITWVASSAAAAVLAIGVLVGVQGHSAAPQRAAVSALPMAQVGTQLLASTVSISGEPWGTFINLRCVCLAPPYASHDTLAMVVVGRDGSQTRLATWLAEPGHTATPAGSISTPVDQIAAVQVVAADTGQVLLQRSL</sequence>
<name>RSLA_MYCTU</name>
<reference key="1">
    <citation type="journal article" date="1998" name="Nature">
        <title>Deciphering the biology of Mycobacterium tuberculosis from the complete genome sequence.</title>
        <authorList>
            <person name="Cole S.T."/>
            <person name="Brosch R."/>
            <person name="Parkhill J."/>
            <person name="Garnier T."/>
            <person name="Churcher C.M."/>
            <person name="Harris D.E."/>
            <person name="Gordon S.V."/>
            <person name="Eiglmeier K."/>
            <person name="Gas S."/>
            <person name="Barry C.E. III"/>
            <person name="Tekaia F."/>
            <person name="Badcock K."/>
            <person name="Basham D."/>
            <person name="Brown D."/>
            <person name="Chillingworth T."/>
            <person name="Connor R."/>
            <person name="Davies R.M."/>
            <person name="Devlin K."/>
            <person name="Feltwell T."/>
            <person name="Gentles S."/>
            <person name="Hamlin N."/>
            <person name="Holroyd S."/>
            <person name="Hornsby T."/>
            <person name="Jagels K."/>
            <person name="Krogh A."/>
            <person name="McLean J."/>
            <person name="Moule S."/>
            <person name="Murphy L.D."/>
            <person name="Oliver S."/>
            <person name="Osborne J."/>
            <person name="Quail M.A."/>
            <person name="Rajandream M.A."/>
            <person name="Rogers J."/>
            <person name="Rutter S."/>
            <person name="Seeger K."/>
            <person name="Skelton S."/>
            <person name="Squares S."/>
            <person name="Squares R."/>
            <person name="Sulston J.E."/>
            <person name="Taylor K."/>
            <person name="Whitehead S."/>
            <person name="Barrell B.G."/>
        </authorList>
    </citation>
    <scope>NUCLEOTIDE SEQUENCE [LARGE SCALE GENOMIC DNA]</scope>
    <source>
        <strain>ATCC 25618 / H37Rv</strain>
    </source>
</reference>
<reference key="2">
    <citation type="journal article" date="2005" name="J. Bacteriol.">
        <title>The Mycobacterium tuberculosis extracytoplasmic-function sigma factor SigL regulates polyketide synthases and secreted or membrane proteins and is required for virulence.</title>
        <authorList>
            <person name="Hahn M.Y."/>
            <person name="Raman S."/>
            <person name="Anaya M."/>
            <person name="Husson R.N."/>
        </authorList>
    </citation>
    <scope>INTERACTION SIGL</scope>
    <scope>INDUCTION</scope>
    <scope>TOPOLOGY</scope>
    <source>
        <strain>ATCC 25618 / H37Rv</strain>
    </source>
</reference>
<reference key="3">
    <citation type="journal article" date="2006" name="Infect. Immun.">
        <title>Posttranslational regulation of Mycobacterium tuberculosis extracytoplasmic-function sigma factor sigma L and roles in virulence and in global regulation of gene expression.</title>
        <authorList>
            <person name="Dainese E."/>
            <person name="Rodrigue S."/>
            <person name="Delogu G."/>
            <person name="Provvedi R."/>
            <person name="Laflamme L."/>
            <person name="Brzezinski R."/>
            <person name="Fadda G."/>
            <person name="Smith I."/>
            <person name="Gaudreau L."/>
            <person name="Palu G."/>
            <person name="Manganelli R."/>
        </authorList>
    </citation>
    <scope>FUNCTION</scope>
    <scope>INTERACTION WITH SIGL</scope>
    <scope>DISRUPTION PHENOTYPE</scope>
    <source>
        <strain>ATCC 25618 / H37Rv</strain>
    </source>
</reference>
<reference key="4">
    <citation type="journal article" date="2010" name="Protein Expr. Purif.">
        <title>Over-expression and purification strategies for recombinant multi-protein oligomers: a case study of Mycobacterium tuberculosis sigma/anti-sigma factor protein complexes.</title>
        <authorList>
            <person name="Thakur K.G."/>
            <person name="Jaiswal R.K."/>
            <person name="Shukla J.K."/>
            <person name="Praveena T."/>
            <person name="Gopal B."/>
        </authorList>
    </citation>
    <scope>INTERACTION WITH SIGL</scope>
</reference>
<reference key="5">
    <citation type="journal article" date="2010" name="J. Mol. Biol.">
        <title>Structural and biochemical bases for the redox sensitivity of Mycobacterium tuberculosis RslA.</title>
        <authorList>
            <person name="Thakur K.G."/>
            <person name="Praveena T."/>
            <person name="Gopal B."/>
        </authorList>
    </citation>
    <scope>X-RAY CRYSTALLOGRAPHY (2.35 ANGSTROMS) OF 1-108 IN COMPLEX WITH ZINC AND SIGL</scope>
    <scope>SUBUNIT</scope>
    <scope>DOMAIN</scope>
    <scope>MUTAGENESIS OF CYS-54 AND CYS-65</scope>
    <source>
        <strain>ATCC 25618 / H37Rv</strain>
    </source>
</reference>
<protein>
    <recommendedName>
        <fullName>Anti-sigma-L factor RslA</fullName>
    </recommendedName>
    <alternativeName>
        <fullName>Regulator of SigL</fullName>
    </alternativeName>
    <alternativeName>
        <fullName>Sigma-L anti-sigma factor RslA</fullName>
    </alternativeName>
</protein>
<proteinExistence type="evidence at protein level"/>
<comment type="function">
    <text evidence="3">An anti-sigma factor for extracytoplasmic function (ECF) sigma factor SigL. ECF sigma factors are held in an inactive form by an anti-sigma factor until released by regulated intramembrane proteolysis (RIP). RIP occurs when an extracytoplasmic signal triggers a concerted proteolytic cascade to transmit information and elicit cellular responses. The membrane-spanning regulatory substrate protein is first cut extracytoplasmically (site-1 protease, S1P), then within the membrane itself (site-2 protease, S2P, Rip1), while cytoplasmic proteases finish degrading the regulatory protein, liberating the sigma factor.</text>
</comment>
<comment type="cofactor">
    <cofactor>
        <name>Zn(2+)</name>
        <dbReference type="ChEBI" id="CHEBI:29105"/>
    </cofactor>
    <text>Binds 1 Zn(2+) ion per subunit.</text>
</comment>
<comment type="subunit">
    <text evidence="2 3 4 5">Interacts with ECF RNA polymerase sigma factor SigL; this should inhibit the interaction of SigL with the RNA polymerase catalytic core.</text>
</comment>
<comment type="subcellular location">
    <subcellularLocation>
        <location evidence="6">Cell membrane</location>
        <topology evidence="6">Single-pass membrane protein</topology>
    </subcellularLocation>
</comment>
<comment type="induction">
    <text evidence="2">Constitutively expressed from a very weak SigL-independent promoter during growth in culture. Also weakly autoregulated. Forms an operon with sigL.</text>
</comment>
<comment type="domain">
    <text evidence="4">The cytosolic domain interacts with sigma factor SigL.</text>
</comment>
<comment type="disruption phenotype">
    <text evidence="3">In a double sigL-rslA disruption mutant, no visible phenotype; not more susceptible than the parental strain to several oxidative and nitrosative stresses. Infected DBA/2 mice showed a significantly prolonged survival time relative to mice infected with wild-type bacteria, although bacteria proliferate normally.</text>
</comment>
<comment type="similarity">
    <text evidence="6">Belongs to the zinc-associated anti-sigma factor (ZAS) superfamily.</text>
</comment>
<organism>
    <name type="scientific">Mycobacterium tuberculosis (strain ATCC 25618 / H37Rv)</name>
    <dbReference type="NCBI Taxonomy" id="83332"/>
    <lineage>
        <taxon>Bacteria</taxon>
        <taxon>Bacillati</taxon>
        <taxon>Actinomycetota</taxon>
        <taxon>Actinomycetes</taxon>
        <taxon>Mycobacteriales</taxon>
        <taxon>Mycobacteriaceae</taxon>
        <taxon>Mycobacterium</taxon>
        <taxon>Mycobacterium tuberculosis complex</taxon>
    </lineage>
</organism>
<keyword id="KW-0002">3D-structure</keyword>
<keyword id="KW-1003">Cell membrane</keyword>
<keyword id="KW-0472">Membrane</keyword>
<keyword id="KW-0479">Metal-binding</keyword>
<keyword id="KW-1185">Reference proteome</keyword>
<keyword id="KW-0804">Transcription</keyword>
<keyword id="KW-0805">Transcription regulation</keyword>
<keyword id="KW-0812">Transmembrane</keyword>
<keyword id="KW-1133">Transmembrane helix</keyword>
<keyword id="KW-0843">Virulence</keyword>
<keyword id="KW-0862">Zinc</keyword>
<evidence type="ECO:0000255" key="1"/>
<evidence type="ECO:0000269" key="2">
    <source>
    </source>
</evidence>
<evidence type="ECO:0000269" key="3">
    <source>
    </source>
</evidence>
<evidence type="ECO:0000269" key="4">
    <source>
    </source>
</evidence>
<evidence type="ECO:0000269" key="5">
    <source>
    </source>
</evidence>
<evidence type="ECO:0000305" key="6"/>
<evidence type="ECO:0007829" key="7">
    <source>
        <dbReference type="PDB" id="3HUG"/>
    </source>
</evidence>
<accession>P9WJ67</accession>
<accession>F2GMW1</accession>
<accession>Q7ARS0</accession>
<accession>Q7D9D3</accession>
<feature type="chain" id="PRO_0000422682" description="Anti-sigma-L factor RslA">
    <location>
        <begin position="1"/>
        <end position="250"/>
    </location>
</feature>
<feature type="topological domain" description="Cytoplasmic" evidence="2">
    <location>
        <begin position="1"/>
        <end position="115"/>
    </location>
</feature>
<feature type="transmembrane region" description="Helical" evidence="1">
    <location>
        <begin position="116"/>
        <end position="136"/>
    </location>
</feature>
<feature type="topological domain" description="Extracellular" evidence="2">
    <location>
        <begin position="137"/>
        <end position="250"/>
    </location>
</feature>
<feature type="binding site" evidence="4">
    <location>
        <position position="25"/>
    </location>
    <ligand>
        <name>Zn(2+)</name>
        <dbReference type="ChEBI" id="CHEBI:29105"/>
    </ligand>
</feature>
<feature type="binding site" evidence="4">
    <location>
        <position position="50"/>
    </location>
    <ligand>
        <name>Zn(2+)</name>
        <dbReference type="ChEBI" id="CHEBI:29105"/>
    </ligand>
</feature>
<feature type="binding site" evidence="4">
    <location>
        <position position="54"/>
    </location>
    <ligand>
        <name>Zn(2+)</name>
        <dbReference type="ChEBI" id="CHEBI:29105"/>
    </ligand>
</feature>
<feature type="binding site" evidence="4">
    <location>
        <position position="57"/>
    </location>
    <ligand>
        <name>Zn(2+)</name>
        <dbReference type="ChEBI" id="CHEBI:29105"/>
    </ligand>
</feature>
<feature type="mutagenesis site" description="Loss of Zn(2+)-binding." evidence="4">
    <original>C</original>
    <variation>S</variation>
    <location>
        <position position="54"/>
    </location>
</feature>
<feature type="mutagenesis site" description="No change in Zn(2+)-binding." evidence="4">
    <original>C</original>
    <variation>S</variation>
    <location>
        <position position="65"/>
    </location>
</feature>
<feature type="helix" evidence="7">
    <location>
        <begin position="26"/>
        <end position="30"/>
    </location>
</feature>
<feature type="helix" evidence="7">
    <location>
        <begin position="31"/>
        <end position="35"/>
    </location>
</feature>
<feature type="helix" evidence="7">
    <location>
        <begin position="41"/>
        <end position="52"/>
    </location>
</feature>
<feature type="helix" evidence="7">
    <location>
        <begin position="55"/>
        <end position="64"/>
    </location>
</feature>
<feature type="helix" evidence="7">
    <location>
        <begin position="67"/>
        <end position="71"/>
    </location>
</feature>
<feature type="helix" evidence="7">
    <location>
        <begin position="76"/>
        <end position="84"/>
    </location>
</feature>